<dbReference type="EC" id="2.1.2.1" evidence="1"/>
<dbReference type="EMBL" id="X91902">
    <property type="protein sequence ID" value="CAA62998.1"/>
    <property type="molecule type" value="mRNA"/>
</dbReference>
<dbReference type="RefSeq" id="NP_001075874.1">
    <property type="nucleotide sequence ID" value="NM_001082405.1"/>
</dbReference>
<dbReference type="SMR" id="P14519"/>
<dbReference type="FunCoup" id="P14519">
    <property type="interactions" value="1237"/>
</dbReference>
<dbReference type="STRING" id="9986.ENSOCUP00000019769"/>
<dbReference type="PaxDb" id="9986-ENSOCUP00000019769"/>
<dbReference type="GeneID" id="100009293"/>
<dbReference type="KEGG" id="ocu:100009293"/>
<dbReference type="CTD" id="6472"/>
<dbReference type="eggNOG" id="KOG2467">
    <property type="taxonomic scope" value="Eukaryota"/>
</dbReference>
<dbReference type="InParanoid" id="P14519"/>
<dbReference type="OrthoDB" id="10265628at2759"/>
<dbReference type="UniPathway" id="UPA00193"/>
<dbReference type="Proteomes" id="UP000001811">
    <property type="component" value="Unplaced"/>
</dbReference>
<dbReference type="GO" id="GO:0070552">
    <property type="term" value="C:BRISC complex"/>
    <property type="evidence" value="ECO:0000250"/>
    <property type="project" value="UniProtKB"/>
</dbReference>
<dbReference type="GO" id="GO:0005737">
    <property type="term" value="C:cytoplasm"/>
    <property type="evidence" value="ECO:0000250"/>
    <property type="project" value="UniProtKB"/>
</dbReference>
<dbReference type="GO" id="GO:0005743">
    <property type="term" value="C:mitochondrial inner membrane"/>
    <property type="evidence" value="ECO:0000250"/>
    <property type="project" value="UniProtKB"/>
</dbReference>
<dbReference type="GO" id="GO:0005759">
    <property type="term" value="C:mitochondrial matrix"/>
    <property type="evidence" value="ECO:0000250"/>
    <property type="project" value="UniProtKB"/>
</dbReference>
<dbReference type="GO" id="GO:0042645">
    <property type="term" value="C:mitochondrial nucleoid"/>
    <property type="evidence" value="ECO:0000250"/>
    <property type="project" value="UniProtKB"/>
</dbReference>
<dbReference type="GO" id="GO:0005739">
    <property type="term" value="C:mitochondrion"/>
    <property type="evidence" value="ECO:0000250"/>
    <property type="project" value="UniProtKB"/>
</dbReference>
<dbReference type="GO" id="GO:0005634">
    <property type="term" value="C:nucleus"/>
    <property type="evidence" value="ECO:0000250"/>
    <property type="project" value="UniProtKB"/>
</dbReference>
<dbReference type="GO" id="GO:0003682">
    <property type="term" value="F:chromatin binding"/>
    <property type="evidence" value="ECO:0000250"/>
    <property type="project" value="UniProtKB"/>
</dbReference>
<dbReference type="GO" id="GO:0004372">
    <property type="term" value="F:glycine hydroxymethyltransferase activity"/>
    <property type="evidence" value="ECO:0000250"/>
    <property type="project" value="UniProtKB"/>
</dbReference>
<dbReference type="GO" id="GO:0030170">
    <property type="term" value="F:pyridoxal phosphate binding"/>
    <property type="evidence" value="ECO:0000250"/>
    <property type="project" value="UniProtKB"/>
</dbReference>
<dbReference type="GO" id="GO:0019264">
    <property type="term" value="P:glycine biosynthetic process from serine"/>
    <property type="evidence" value="ECO:0007669"/>
    <property type="project" value="InterPro"/>
</dbReference>
<dbReference type="GO" id="GO:0006544">
    <property type="term" value="P:glycine metabolic process"/>
    <property type="evidence" value="ECO:0000250"/>
    <property type="project" value="UniProtKB"/>
</dbReference>
<dbReference type="GO" id="GO:0006563">
    <property type="term" value="P:L-serine metabolic process"/>
    <property type="evidence" value="ECO:0000250"/>
    <property type="project" value="UniProtKB"/>
</dbReference>
<dbReference type="GO" id="GO:0006730">
    <property type="term" value="P:one-carbon metabolic process"/>
    <property type="evidence" value="ECO:0000250"/>
    <property type="project" value="UniProtKB"/>
</dbReference>
<dbReference type="GO" id="GO:0051289">
    <property type="term" value="P:protein homotetramerization"/>
    <property type="evidence" value="ECO:0000250"/>
    <property type="project" value="UniProtKB"/>
</dbReference>
<dbReference type="GO" id="GO:0070536">
    <property type="term" value="P:protein K63-linked deubiquitination"/>
    <property type="evidence" value="ECO:0000250"/>
    <property type="project" value="UniProtKB"/>
</dbReference>
<dbReference type="GO" id="GO:0051262">
    <property type="term" value="P:protein tetramerization"/>
    <property type="evidence" value="ECO:0000250"/>
    <property type="project" value="UniProtKB"/>
</dbReference>
<dbReference type="GO" id="GO:1903715">
    <property type="term" value="P:regulation of aerobic respiration"/>
    <property type="evidence" value="ECO:0000250"/>
    <property type="project" value="UniProtKB"/>
</dbReference>
<dbReference type="GO" id="GO:0070129">
    <property type="term" value="P:regulation of mitochondrial translation"/>
    <property type="evidence" value="ECO:0000250"/>
    <property type="project" value="UniProtKB"/>
</dbReference>
<dbReference type="GO" id="GO:0002082">
    <property type="term" value="P:regulation of oxidative phosphorylation"/>
    <property type="evidence" value="ECO:0000250"/>
    <property type="project" value="UniProtKB"/>
</dbReference>
<dbReference type="GO" id="GO:0034340">
    <property type="term" value="P:response to type I interferon"/>
    <property type="evidence" value="ECO:0000250"/>
    <property type="project" value="UniProtKB"/>
</dbReference>
<dbReference type="GO" id="GO:0035999">
    <property type="term" value="P:tetrahydrofolate interconversion"/>
    <property type="evidence" value="ECO:0007669"/>
    <property type="project" value="UniProtKB-UniPathway"/>
</dbReference>
<dbReference type="GO" id="GO:0046653">
    <property type="term" value="P:tetrahydrofolate metabolic process"/>
    <property type="evidence" value="ECO:0000250"/>
    <property type="project" value="UniProtKB"/>
</dbReference>
<dbReference type="CDD" id="cd00378">
    <property type="entry name" value="SHMT"/>
    <property type="match status" value="1"/>
</dbReference>
<dbReference type="FunFam" id="3.40.640.10:FF:000097">
    <property type="entry name" value="Serine hydroxymethyltransferase"/>
    <property type="match status" value="1"/>
</dbReference>
<dbReference type="FunFam" id="3.90.1150.10:FF:000048">
    <property type="entry name" value="Serine hydroxymethyltransferase, mitochondrial"/>
    <property type="match status" value="1"/>
</dbReference>
<dbReference type="Gene3D" id="3.90.1150.10">
    <property type="entry name" value="Aspartate Aminotransferase, domain 1"/>
    <property type="match status" value="1"/>
</dbReference>
<dbReference type="Gene3D" id="3.40.640.10">
    <property type="entry name" value="Type I PLP-dependent aspartate aminotransferase-like (Major domain)"/>
    <property type="match status" value="1"/>
</dbReference>
<dbReference type="HAMAP" id="MF_00051">
    <property type="entry name" value="SHMT"/>
    <property type="match status" value="1"/>
</dbReference>
<dbReference type="InterPro" id="IPR015424">
    <property type="entry name" value="PyrdxlP-dep_Trfase"/>
</dbReference>
<dbReference type="InterPro" id="IPR015421">
    <property type="entry name" value="PyrdxlP-dep_Trfase_major"/>
</dbReference>
<dbReference type="InterPro" id="IPR015422">
    <property type="entry name" value="PyrdxlP-dep_Trfase_small"/>
</dbReference>
<dbReference type="InterPro" id="IPR001085">
    <property type="entry name" value="Ser_HO-MeTrfase"/>
</dbReference>
<dbReference type="InterPro" id="IPR049943">
    <property type="entry name" value="Ser_HO-MeTrfase-like"/>
</dbReference>
<dbReference type="InterPro" id="IPR019798">
    <property type="entry name" value="Ser_HO-MeTrfase_PLP_BS"/>
</dbReference>
<dbReference type="InterPro" id="IPR039429">
    <property type="entry name" value="SHMT-like_dom"/>
</dbReference>
<dbReference type="NCBIfam" id="NF000586">
    <property type="entry name" value="PRK00011.1"/>
    <property type="match status" value="1"/>
</dbReference>
<dbReference type="PANTHER" id="PTHR11680">
    <property type="entry name" value="SERINE HYDROXYMETHYLTRANSFERASE"/>
    <property type="match status" value="1"/>
</dbReference>
<dbReference type="PANTHER" id="PTHR11680:SF28">
    <property type="entry name" value="SERINE HYDROXYMETHYLTRANSFERASE, MITOCHONDRIAL"/>
    <property type="match status" value="1"/>
</dbReference>
<dbReference type="Pfam" id="PF00464">
    <property type="entry name" value="SHMT"/>
    <property type="match status" value="1"/>
</dbReference>
<dbReference type="PIRSF" id="PIRSF000412">
    <property type="entry name" value="SHMT"/>
    <property type="match status" value="1"/>
</dbReference>
<dbReference type="SUPFAM" id="SSF53383">
    <property type="entry name" value="PLP-dependent transferases"/>
    <property type="match status" value="1"/>
</dbReference>
<dbReference type="PROSITE" id="PS00096">
    <property type="entry name" value="SHMT"/>
    <property type="match status" value="1"/>
</dbReference>
<gene>
    <name type="primary">SHMT2</name>
</gene>
<protein>
    <recommendedName>
        <fullName>Serine hydroxymethyltransferase, mitochondrial</fullName>
        <shortName>SHMT</shortName>
        <ecNumber evidence="1">2.1.2.1</ecNumber>
    </recommendedName>
    <alternativeName>
        <fullName>Glycine hydroxymethyltransferase</fullName>
    </alternativeName>
    <alternativeName>
        <fullName>Serine methylase</fullName>
    </alternativeName>
</protein>
<proteinExistence type="evidence at protein level"/>
<sequence length="504" mass="55902">MLPFSLLWAVRPLQRCGPLVRTAVRAQHGKAAQTQTGEASRGWTGQESLSDTDPEMWELLQREKDRQCRGLELIASENFCIRAALEALGSCLNNKYSEGYPGKRYYGGAEVVDEIELLCQRRALEAFDLDPAQWGVNVQPYSGSPANLAAYTALLQPHDRIMGLDLPDGGHLTHGYMSDVKRVSATSIFFESMPYKLNPQTGLIDYEQLALTARLFRPRLIIAGTSAYARLIDYARMREVCDEVKAHLLADMAHISGLVAAKVIPSPFKHADVVTTTTHKTLRGARSGLIFYRKGVRTVDPKTGQEIPYTFEDRINFAVFPSLQGGPHNHAIAAVAVALKQACTPMFREYSLQVLKNARAMADALLERGYSLVSGGTDNHLVLVDLRPKGLDGARAERVLELVSITANKNTCPGDRSAITPGGLRLGAPALTSRQFREDDFRRVVDFIDEGVNIGLEVKRKTAKLQDFKSFLLKDPETSQHLADLRRRVQQFARAFPMPGFPEH</sequence>
<evidence type="ECO:0000250" key="1">
    <source>
        <dbReference type="UniProtKB" id="P34897"/>
    </source>
</evidence>
<evidence type="ECO:0000256" key="2">
    <source>
        <dbReference type="SAM" id="MobiDB-lite"/>
    </source>
</evidence>
<evidence type="ECO:0000269" key="3">
    <source>
    </source>
</evidence>
<evidence type="ECO:0000305" key="4"/>
<organism>
    <name type="scientific">Oryctolagus cuniculus</name>
    <name type="common">Rabbit</name>
    <dbReference type="NCBI Taxonomy" id="9986"/>
    <lineage>
        <taxon>Eukaryota</taxon>
        <taxon>Metazoa</taxon>
        <taxon>Chordata</taxon>
        <taxon>Craniata</taxon>
        <taxon>Vertebrata</taxon>
        <taxon>Euteleostomi</taxon>
        <taxon>Mammalia</taxon>
        <taxon>Eutheria</taxon>
        <taxon>Euarchontoglires</taxon>
        <taxon>Glires</taxon>
        <taxon>Lagomorpha</taxon>
        <taxon>Leporidae</taxon>
        <taxon>Oryctolagus</taxon>
    </lineage>
</organism>
<keyword id="KW-0007">Acetylation</keyword>
<keyword id="KW-0963">Cytoplasm</keyword>
<keyword id="KW-0903">Direct protein sequencing</keyword>
<keyword id="KW-0472">Membrane</keyword>
<keyword id="KW-0496">Mitochondrion</keyword>
<keyword id="KW-0999">Mitochondrion inner membrane</keyword>
<keyword id="KW-1135">Mitochondrion nucleoid</keyword>
<keyword id="KW-0539">Nucleus</keyword>
<keyword id="KW-0554">One-carbon metabolism</keyword>
<keyword id="KW-0597">Phosphoprotein</keyword>
<keyword id="KW-0663">Pyridoxal phosphate</keyword>
<keyword id="KW-1185">Reference proteome</keyword>
<keyword id="KW-0808">Transferase</keyword>
<keyword id="KW-0809">Transit peptide</keyword>
<name>GLYM_RABIT</name>
<feature type="transit peptide" description="Mitochondrion" evidence="3">
    <location>
        <begin position="1"/>
        <end position="29"/>
    </location>
</feature>
<feature type="chain" id="PRO_0000032563" description="Serine hydroxymethyltransferase, mitochondrial">
    <location>
        <begin position="30"/>
        <end position="504"/>
    </location>
</feature>
<feature type="region of interest" description="Disordered" evidence="2">
    <location>
        <begin position="28"/>
        <end position="49"/>
    </location>
</feature>
<feature type="compositionally biased region" description="Polar residues" evidence="2">
    <location>
        <begin position="32"/>
        <end position="49"/>
    </location>
</feature>
<feature type="modified residue" description="N6-acetyllysine" evidence="1">
    <location>
        <position position="103"/>
    </location>
</feature>
<feature type="modified residue" description="N6-acetyllysine" evidence="1">
    <location>
        <position position="181"/>
    </location>
</feature>
<feature type="modified residue" description="N6-acetyllysine" evidence="1">
    <location>
        <position position="196"/>
    </location>
</feature>
<feature type="modified residue" description="N6-(pyridoxal phosphate)lysine; alternate" evidence="1">
    <location>
        <position position="280"/>
    </location>
</feature>
<feature type="modified residue" description="N6-succinyllysine; alternate" evidence="1">
    <location>
        <position position="280"/>
    </location>
</feature>
<feature type="modified residue" description="N6-acetyllysine" evidence="1">
    <location>
        <position position="356"/>
    </location>
</feature>
<feature type="modified residue" description="N6-acetyllysine" evidence="1">
    <location>
        <position position="464"/>
    </location>
</feature>
<feature type="modified residue" description="N6-acetyllysine" evidence="1">
    <location>
        <position position="469"/>
    </location>
</feature>
<feature type="modified residue" description="Phosphoserine" evidence="1">
    <location>
        <position position="470"/>
    </location>
</feature>
<feature type="modified residue" description="N6-acetyllysine" evidence="1">
    <location>
        <position position="474"/>
    </location>
</feature>
<feature type="sequence conflict" description="In Ref. 2; AA sequence." evidence="4" ref="2">
    <original>I</original>
    <variation>S</variation>
    <location>
        <position position="81"/>
    </location>
</feature>
<feature type="sequence conflict" description="In Ref. 2; AA sequence." evidence="4" ref="2">
    <original>H</original>
    <variation>R</variation>
    <location>
        <position position="481"/>
    </location>
</feature>
<accession>P14519</accession>
<accession>P79219</accession>
<reference key="1">
    <citation type="submission" date="1997-02" db="EMBL/GenBank/DDBJ databases">
        <authorList>
            <person name="Whitehouse S.K."/>
            <person name="Sanders P.G."/>
            <person name="Snell K."/>
        </authorList>
    </citation>
    <scope>NUCLEOTIDE SEQUENCE [MRNA]</scope>
    <source>
        <strain>New Zealand white</strain>
        <tissue>Liver</tissue>
    </source>
</reference>
<reference key="2">
    <citation type="journal article" date="1989" name="J. Biol. Chem.">
        <title>The primary structure of rabbit liver mitochondrial serine hydroxymethyltransferase.</title>
        <authorList>
            <person name="Martini F."/>
            <person name="Maras B."/>
            <person name="Tanci P."/>
            <person name="Angelaccio S."/>
            <person name="Pascarella S."/>
            <person name="Barra D."/>
            <person name="Bossa F."/>
            <person name="Schirch V."/>
        </authorList>
    </citation>
    <scope>PROTEIN SEQUENCE OF 30-504</scope>
    <source>
        <tissue>Liver</tissue>
    </source>
</reference>
<comment type="function">
    <text evidence="1">Catalyzes the cleavage of serine to glycine accompanied with the production of 5,10-methylenetetrahydrofolate, an essential intermediate for purine biosynthesis. Serine provides the major source of folate one-carbon in cells by catalyzing the transfer of one carbon from serine to tetrahydrofolate. Contributes to the de novo mitochondrial thymidylate biosynthesis pathway via its role in glycine and tetrahydrofolate metabolism: thymidylate biosynthesis is required to prevent uracil accumulation in mtDNA. Also required for mitochondrial translation by producing 5,10-methylenetetrahydrofolate; 5,10-methylenetetrahydrofolate providing methyl donors to produce the taurinomethyluridine base at the wobble position of some mitochondrial tRNAs. Associates with mitochondrial DNA. In addition to its role in mitochondria, also plays a role in the deubiquitination of target proteins as component of the BRISC complex: required for IFNAR1 deubiquitination by the BRISC complex.</text>
</comment>
<comment type="catalytic activity">
    <reaction evidence="1">
        <text>(6R)-5,10-methylene-5,6,7,8-tetrahydrofolate + glycine + H2O = (6S)-5,6,7,8-tetrahydrofolate + L-serine</text>
        <dbReference type="Rhea" id="RHEA:15481"/>
        <dbReference type="ChEBI" id="CHEBI:15377"/>
        <dbReference type="ChEBI" id="CHEBI:15636"/>
        <dbReference type="ChEBI" id="CHEBI:33384"/>
        <dbReference type="ChEBI" id="CHEBI:57305"/>
        <dbReference type="ChEBI" id="CHEBI:57453"/>
        <dbReference type="EC" id="2.1.2.1"/>
    </reaction>
    <physiologicalReaction direction="right-to-left" evidence="1">
        <dbReference type="Rhea" id="RHEA:15483"/>
    </physiologicalReaction>
</comment>
<comment type="cofactor">
    <cofactor evidence="1">
        <name>pyridoxal 5'-phosphate</name>
        <dbReference type="ChEBI" id="CHEBI:597326"/>
    </cofactor>
</comment>
<comment type="activity regulation">
    <text evidence="1">Hydroxymethyltransferase is inhibited by succinylation at Lys-280.</text>
</comment>
<comment type="pathway">
    <text evidence="1">One-carbon metabolism; tetrahydrofolate interconversion.</text>
</comment>
<comment type="subunit">
    <text evidence="1">Homotetramer; in the presence of bound pyridoxal 5'-phosphate. Homodimer; in the absence of bound pyridoxal 5'-phosphate. Pyridoxal 5'-phosphate binding mediates an important conformation change that is required for tetramerization. Interacts with ABRAXAS2; the interaction is direct. Identified in a complex with ABRAXAS2 and the other subunits of the BRISC complex, at least composed of the ABRAXAS2, BRCC3/BRCC36, BABAM2 and BABAM1/NBA1. Identified in a complex with ABRAXAS2 and IFNAR1. Interacts with KIRREL3.</text>
</comment>
<comment type="subcellular location">
    <subcellularLocation>
        <location evidence="1">Mitochondrion</location>
    </subcellularLocation>
    <subcellularLocation>
        <location evidence="1">Mitochondrion matrix</location>
        <location evidence="1">Mitochondrion nucleoid</location>
    </subcellularLocation>
    <subcellularLocation>
        <location evidence="1">Mitochondrion inner membrane</location>
    </subcellularLocation>
    <subcellularLocation>
        <location evidence="1">Cytoplasm</location>
    </subcellularLocation>
    <subcellularLocation>
        <location evidence="1">Nucleus</location>
    </subcellularLocation>
    <text evidence="1">Mainly localizes in the mitochondrion. Also found in the cytoplasm and nucleus as part of the BRISC complex.</text>
</comment>
<comment type="PTM">
    <text evidence="1">Succinylation at Lys-280 inhibits the hydroxymethyltransferase activity. Desuccinylation by SIRT5 restores the activity, leading to promote cell proliferation.</text>
</comment>
<comment type="miscellaneous">
    <text evidence="1">In eukaryotes there are two forms of the enzymes: a cytosolic one and a mitochondrial one.</text>
</comment>
<comment type="similarity">
    <text evidence="4">Belongs to the SHMT family.</text>
</comment>